<evidence type="ECO:0000255" key="1">
    <source>
        <dbReference type="HAMAP-Rule" id="MF_00385"/>
    </source>
</evidence>
<evidence type="ECO:0000256" key="2">
    <source>
        <dbReference type="SAM" id="MobiDB-lite"/>
    </source>
</evidence>
<evidence type="ECO:0000305" key="3"/>
<protein>
    <recommendedName>
        <fullName evidence="1">Small ribosomal subunit protein bS16</fullName>
    </recommendedName>
    <alternativeName>
        <fullName evidence="3">30S ribosomal protein S16</fullName>
    </alternativeName>
</protein>
<name>RS16_CHESB</name>
<keyword id="KW-0687">Ribonucleoprotein</keyword>
<keyword id="KW-0689">Ribosomal protein</keyword>
<comment type="similarity">
    <text evidence="1">Belongs to the bacterial ribosomal protein bS16 family.</text>
</comment>
<organism>
    <name type="scientific">Chelativorans sp. (strain BNC1)</name>
    <dbReference type="NCBI Taxonomy" id="266779"/>
    <lineage>
        <taxon>Bacteria</taxon>
        <taxon>Pseudomonadati</taxon>
        <taxon>Pseudomonadota</taxon>
        <taxon>Alphaproteobacteria</taxon>
        <taxon>Hyphomicrobiales</taxon>
        <taxon>Phyllobacteriaceae</taxon>
        <taxon>Chelativorans</taxon>
    </lineage>
</organism>
<gene>
    <name evidence="1" type="primary">rpsP</name>
    <name type="ordered locus">Meso_3339</name>
</gene>
<accession>Q11D15</accession>
<reference key="1">
    <citation type="submission" date="2006-06" db="EMBL/GenBank/DDBJ databases">
        <title>Complete sequence of chromosome of Mesorhizobium sp. BNC1.</title>
        <authorList>
            <consortium name="US DOE Joint Genome Institute"/>
            <person name="Copeland A."/>
            <person name="Lucas S."/>
            <person name="Lapidus A."/>
            <person name="Barry K."/>
            <person name="Detter J.C."/>
            <person name="Glavina del Rio T."/>
            <person name="Hammon N."/>
            <person name="Israni S."/>
            <person name="Dalin E."/>
            <person name="Tice H."/>
            <person name="Pitluck S."/>
            <person name="Chertkov O."/>
            <person name="Brettin T."/>
            <person name="Bruce D."/>
            <person name="Han C."/>
            <person name="Tapia R."/>
            <person name="Gilna P."/>
            <person name="Schmutz J."/>
            <person name="Larimer F."/>
            <person name="Land M."/>
            <person name="Hauser L."/>
            <person name="Kyrpides N."/>
            <person name="Mikhailova N."/>
            <person name="Richardson P."/>
        </authorList>
    </citation>
    <scope>NUCLEOTIDE SEQUENCE [LARGE SCALE GENOMIC DNA]</scope>
    <source>
        <strain>BNC1</strain>
    </source>
</reference>
<feature type="chain" id="PRO_1000049288" description="Small ribosomal subunit protein bS16">
    <location>
        <begin position="1"/>
        <end position="134"/>
    </location>
</feature>
<feature type="region of interest" description="Disordered" evidence="2">
    <location>
        <begin position="81"/>
        <end position="134"/>
    </location>
</feature>
<feature type="compositionally biased region" description="Basic and acidic residues" evidence="2">
    <location>
        <begin position="91"/>
        <end position="101"/>
    </location>
</feature>
<feature type="compositionally biased region" description="Low complexity" evidence="2">
    <location>
        <begin position="116"/>
        <end position="134"/>
    </location>
</feature>
<proteinExistence type="inferred from homology"/>
<dbReference type="EMBL" id="CP000390">
    <property type="protein sequence ID" value="ABG64710.1"/>
    <property type="molecule type" value="Genomic_DNA"/>
</dbReference>
<dbReference type="SMR" id="Q11D15"/>
<dbReference type="STRING" id="266779.Meso_3339"/>
<dbReference type="KEGG" id="mes:Meso_3339"/>
<dbReference type="eggNOG" id="COG0228">
    <property type="taxonomic scope" value="Bacteria"/>
</dbReference>
<dbReference type="HOGENOM" id="CLU_100590_3_1_5"/>
<dbReference type="OrthoDB" id="9807878at2"/>
<dbReference type="GO" id="GO:0005737">
    <property type="term" value="C:cytoplasm"/>
    <property type="evidence" value="ECO:0007669"/>
    <property type="project" value="UniProtKB-ARBA"/>
</dbReference>
<dbReference type="GO" id="GO:0015935">
    <property type="term" value="C:small ribosomal subunit"/>
    <property type="evidence" value="ECO:0007669"/>
    <property type="project" value="TreeGrafter"/>
</dbReference>
<dbReference type="GO" id="GO:0003735">
    <property type="term" value="F:structural constituent of ribosome"/>
    <property type="evidence" value="ECO:0007669"/>
    <property type="project" value="InterPro"/>
</dbReference>
<dbReference type="GO" id="GO:0006412">
    <property type="term" value="P:translation"/>
    <property type="evidence" value="ECO:0007669"/>
    <property type="project" value="UniProtKB-UniRule"/>
</dbReference>
<dbReference type="Gene3D" id="3.30.1320.10">
    <property type="match status" value="1"/>
</dbReference>
<dbReference type="HAMAP" id="MF_00385">
    <property type="entry name" value="Ribosomal_bS16"/>
    <property type="match status" value="1"/>
</dbReference>
<dbReference type="InterPro" id="IPR000307">
    <property type="entry name" value="Ribosomal_bS16"/>
</dbReference>
<dbReference type="InterPro" id="IPR023803">
    <property type="entry name" value="Ribosomal_bS16_dom_sf"/>
</dbReference>
<dbReference type="NCBIfam" id="TIGR00002">
    <property type="entry name" value="S16"/>
    <property type="match status" value="1"/>
</dbReference>
<dbReference type="PANTHER" id="PTHR12919">
    <property type="entry name" value="30S RIBOSOMAL PROTEIN S16"/>
    <property type="match status" value="1"/>
</dbReference>
<dbReference type="PANTHER" id="PTHR12919:SF20">
    <property type="entry name" value="SMALL RIBOSOMAL SUBUNIT PROTEIN BS16M"/>
    <property type="match status" value="1"/>
</dbReference>
<dbReference type="Pfam" id="PF00886">
    <property type="entry name" value="Ribosomal_S16"/>
    <property type="match status" value="1"/>
</dbReference>
<dbReference type="SUPFAM" id="SSF54565">
    <property type="entry name" value="Ribosomal protein S16"/>
    <property type="match status" value="1"/>
</dbReference>
<sequence>MALKIRLARAGSKKRPYYHIVVADVRAPRDGRFIEQIGSWNPMLPKDSERVKLNEERIKHWLANGALPTDRVLRFLDQAGLAKRPARSNPKKAEPGKKAQERLAAARQAEEEAKAAAEAAAAAPAEAPAEEAAS</sequence>